<keyword id="KW-0002">3D-structure</keyword>
<keyword id="KW-0227">DNA damage</keyword>
<keyword id="KW-0233">DNA recombination</keyword>
<keyword id="KW-0234">DNA repair</keyword>
<keyword id="KW-0235">DNA replication</keyword>
<keyword id="KW-0238">DNA-binding</keyword>
<keyword id="KW-1185">Reference proteome</keyword>
<sequence length="179" mass="20043">MFNKVIMVGRLTRNVELKYLPSGSAAATIGLATSRRFKKQDGTLGEEVCFIDARLFGRTAEIANQYLSKGSSVLIEGRLTYESWMDQTGKKNSRHTITADSLQFMDKKSDNPQANAMQDSIMHENSNNAYPANHNAPSQDPFNQAYAQNAYAKENLQAQPSKYQNSVPEINIDEEEIPF</sequence>
<evidence type="ECO:0000255" key="1">
    <source>
        <dbReference type="HAMAP-Rule" id="MF_00984"/>
    </source>
</evidence>
<evidence type="ECO:0000256" key="2">
    <source>
        <dbReference type="SAM" id="MobiDB-lite"/>
    </source>
</evidence>
<evidence type="ECO:0007829" key="3">
    <source>
        <dbReference type="PDB" id="2VW9"/>
    </source>
</evidence>
<reference key="1">
    <citation type="journal article" date="1997" name="Nature">
        <title>The complete genome sequence of the gastric pathogen Helicobacter pylori.</title>
        <authorList>
            <person name="Tomb J.-F."/>
            <person name="White O."/>
            <person name="Kerlavage A.R."/>
            <person name="Clayton R.A."/>
            <person name="Sutton G.G."/>
            <person name="Fleischmann R.D."/>
            <person name="Ketchum K.A."/>
            <person name="Klenk H.-P."/>
            <person name="Gill S.R."/>
            <person name="Dougherty B.A."/>
            <person name="Nelson K.E."/>
            <person name="Quackenbush J."/>
            <person name="Zhou L."/>
            <person name="Kirkness E.F."/>
            <person name="Peterson S.N."/>
            <person name="Loftus B.J."/>
            <person name="Richardson D.L."/>
            <person name="Dodson R.J."/>
            <person name="Khalak H.G."/>
            <person name="Glodek A."/>
            <person name="McKenney K."/>
            <person name="FitzGerald L.M."/>
            <person name="Lee N."/>
            <person name="Adams M.D."/>
            <person name="Hickey E.K."/>
            <person name="Berg D.E."/>
            <person name="Gocayne J.D."/>
            <person name="Utterback T.R."/>
            <person name="Peterson J.D."/>
            <person name="Kelley J.M."/>
            <person name="Cotton M.D."/>
            <person name="Weidman J.F."/>
            <person name="Fujii C."/>
            <person name="Bowman C."/>
            <person name="Watthey L."/>
            <person name="Wallin E."/>
            <person name="Hayes W.S."/>
            <person name="Borodovsky M."/>
            <person name="Karp P.D."/>
            <person name="Smith H.O."/>
            <person name="Fraser C.M."/>
            <person name="Venter J.C."/>
        </authorList>
    </citation>
    <scope>NUCLEOTIDE SEQUENCE [LARGE SCALE GENOMIC DNA]</scope>
    <source>
        <strain>ATCC 700392 / 26695</strain>
    </source>
</reference>
<feature type="chain" id="PRO_0000096050" description="Single-stranded DNA-binding protein">
    <location>
        <begin position="1"/>
        <end position="179"/>
    </location>
</feature>
<feature type="domain" description="SSB" evidence="1">
    <location>
        <begin position="1"/>
        <end position="106"/>
    </location>
</feature>
<feature type="region of interest" description="Disordered" evidence="2">
    <location>
        <begin position="157"/>
        <end position="179"/>
    </location>
</feature>
<feature type="short sequence motif" description="Important for interaction with partner proteins" evidence="1">
    <location>
        <begin position="174"/>
        <end position="179"/>
    </location>
</feature>
<feature type="compositionally biased region" description="Polar residues" evidence="2">
    <location>
        <begin position="157"/>
        <end position="168"/>
    </location>
</feature>
<feature type="strand" evidence="3">
    <location>
        <begin position="5"/>
        <end position="13"/>
    </location>
</feature>
<feature type="strand" evidence="3">
    <location>
        <begin position="16"/>
        <end position="19"/>
    </location>
</feature>
<feature type="strand" evidence="3">
    <location>
        <begin position="25"/>
        <end position="38"/>
    </location>
</feature>
<feature type="strand" evidence="3">
    <location>
        <begin position="40"/>
        <end position="42"/>
    </location>
</feature>
<feature type="strand" evidence="3">
    <location>
        <begin position="44"/>
        <end position="56"/>
    </location>
</feature>
<feature type="helix" evidence="3">
    <location>
        <begin position="57"/>
        <end position="66"/>
    </location>
</feature>
<feature type="strand" evidence="3">
    <location>
        <begin position="72"/>
        <end position="85"/>
    </location>
</feature>
<feature type="strand" evidence="3">
    <location>
        <begin position="91"/>
        <end position="104"/>
    </location>
</feature>
<accession>O25841</accession>
<organism>
    <name type="scientific">Helicobacter pylori (strain ATCC 700392 / 26695)</name>
    <name type="common">Campylobacter pylori</name>
    <dbReference type="NCBI Taxonomy" id="85962"/>
    <lineage>
        <taxon>Bacteria</taxon>
        <taxon>Pseudomonadati</taxon>
        <taxon>Campylobacterota</taxon>
        <taxon>Epsilonproteobacteria</taxon>
        <taxon>Campylobacterales</taxon>
        <taxon>Helicobacteraceae</taxon>
        <taxon>Helicobacter</taxon>
    </lineage>
</organism>
<proteinExistence type="evidence at protein level"/>
<dbReference type="EMBL" id="AE000511">
    <property type="protein sequence ID" value="AAD08291.1"/>
    <property type="molecule type" value="Genomic_DNA"/>
</dbReference>
<dbReference type="PIR" id="E64675">
    <property type="entry name" value="E64675"/>
</dbReference>
<dbReference type="RefSeq" id="NP_208037.1">
    <property type="nucleotide sequence ID" value="NC_000915.1"/>
</dbReference>
<dbReference type="RefSeq" id="WP_000482414.1">
    <property type="nucleotide sequence ID" value="NC_018939.1"/>
</dbReference>
<dbReference type="PDB" id="2VW9">
    <property type="method" value="X-ray"/>
    <property type="resolution" value="2.30 A"/>
    <property type="chains" value="A/B=1-134"/>
</dbReference>
<dbReference type="PDBsum" id="2VW9"/>
<dbReference type="SMR" id="O25841"/>
<dbReference type="DIP" id="DIP-3468N"/>
<dbReference type="IntAct" id="O25841">
    <property type="interactions" value="7"/>
</dbReference>
<dbReference type="MINT" id="O25841"/>
<dbReference type="STRING" id="85962.HP_1245"/>
<dbReference type="PaxDb" id="85962-C694_06435"/>
<dbReference type="DNASU" id="900340"/>
<dbReference type="EnsemblBacteria" id="AAD08291">
    <property type="protein sequence ID" value="AAD08291"/>
    <property type="gene ID" value="HP_1245"/>
</dbReference>
<dbReference type="KEGG" id="heo:C694_06435"/>
<dbReference type="KEGG" id="hpy:HP_1245"/>
<dbReference type="PATRIC" id="fig|85962.47.peg.1337"/>
<dbReference type="eggNOG" id="COG0629">
    <property type="taxonomic scope" value="Bacteria"/>
</dbReference>
<dbReference type="InParanoid" id="O25841"/>
<dbReference type="OrthoDB" id="9809878at2"/>
<dbReference type="PhylomeDB" id="O25841"/>
<dbReference type="EvolutionaryTrace" id="O25841"/>
<dbReference type="Proteomes" id="UP000000429">
    <property type="component" value="Chromosome"/>
</dbReference>
<dbReference type="GO" id="GO:0009295">
    <property type="term" value="C:nucleoid"/>
    <property type="evidence" value="ECO:0000318"/>
    <property type="project" value="GO_Central"/>
</dbReference>
<dbReference type="GO" id="GO:0008047">
    <property type="term" value="F:enzyme activator activity"/>
    <property type="evidence" value="ECO:0000318"/>
    <property type="project" value="GO_Central"/>
</dbReference>
<dbReference type="GO" id="GO:0003697">
    <property type="term" value="F:single-stranded DNA binding"/>
    <property type="evidence" value="ECO:0000318"/>
    <property type="project" value="GO_Central"/>
</dbReference>
<dbReference type="GO" id="GO:0006310">
    <property type="term" value="P:DNA recombination"/>
    <property type="evidence" value="ECO:0007669"/>
    <property type="project" value="UniProtKB-UniRule"/>
</dbReference>
<dbReference type="GO" id="GO:0006281">
    <property type="term" value="P:DNA repair"/>
    <property type="evidence" value="ECO:0007669"/>
    <property type="project" value="UniProtKB-UniRule"/>
</dbReference>
<dbReference type="GO" id="GO:0006260">
    <property type="term" value="P:DNA replication"/>
    <property type="evidence" value="ECO:0000318"/>
    <property type="project" value="GO_Central"/>
</dbReference>
<dbReference type="CDD" id="cd04496">
    <property type="entry name" value="SSB_OBF"/>
    <property type="match status" value="1"/>
</dbReference>
<dbReference type="FunFam" id="2.40.50.140:FF:000598">
    <property type="entry name" value="Single-stranded DNA-binding protein"/>
    <property type="match status" value="1"/>
</dbReference>
<dbReference type="Gene3D" id="2.40.50.140">
    <property type="entry name" value="Nucleic acid-binding proteins"/>
    <property type="match status" value="1"/>
</dbReference>
<dbReference type="HAMAP" id="MF_00984">
    <property type="entry name" value="SSB"/>
    <property type="match status" value="1"/>
</dbReference>
<dbReference type="InterPro" id="IPR012340">
    <property type="entry name" value="NA-bd_OB-fold"/>
</dbReference>
<dbReference type="InterPro" id="IPR000424">
    <property type="entry name" value="Primosome_PriB/ssb"/>
</dbReference>
<dbReference type="InterPro" id="IPR011344">
    <property type="entry name" value="ssDNA-bd"/>
</dbReference>
<dbReference type="NCBIfam" id="NF006297">
    <property type="entry name" value="PRK08486.1"/>
    <property type="match status" value="1"/>
</dbReference>
<dbReference type="NCBIfam" id="TIGR00621">
    <property type="entry name" value="ssb"/>
    <property type="match status" value="1"/>
</dbReference>
<dbReference type="PANTHER" id="PTHR10302">
    <property type="entry name" value="SINGLE-STRANDED DNA-BINDING PROTEIN"/>
    <property type="match status" value="1"/>
</dbReference>
<dbReference type="PANTHER" id="PTHR10302:SF27">
    <property type="entry name" value="SINGLE-STRANDED DNA-BINDING PROTEIN"/>
    <property type="match status" value="1"/>
</dbReference>
<dbReference type="Pfam" id="PF00436">
    <property type="entry name" value="SSB"/>
    <property type="match status" value="1"/>
</dbReference>
<dbReference type="PIRSF" id="PIRSF002070">
    <property type="entry name" value="SSB"/>
    <property type="match status" value="1"/>
</dbReference>
<dbReference type="SUPFAM" id="SSF50249">
    <property type="entry name" value="Nucleic acid-binding proteins"/>
    <property type="match status" value="1"/>
</dbReference>
<dbReference type="PROSITE" id="PS50935">
    <property type="entry name" value="SSB"/>
    <property type="match status" value="1"/>
</dbReference>
<name>SSB_HELPY</name>
<comment type="function">
    <text evidence="1">Plays an important role in DNA replication, recombination and repair. Binds to ssDNA and to an array of partner proteins to recruit them to their sites of action during DNA metabolism.</text>
</comment>
<comment type="subunit">
    <text evidence="1">Homotetramer.</text>
</comment>
<comment type="interaction">
    <interactant intactId="EBI-527972">
        <id>O25841</id>
    </interactant>
    <interactant intactId="EBI-527960">
        <id>O25365</id>
        <label>HP_0650</label>
    </interactant>
    <organismsDiffer>false</organismsDiffer>
    <experiments>3</experiments>
</comment>
<gene>
    <name type="primary">ssb</name>
    <name type="ordered locus">HP_1245</name>
</gene>
<protein>
    <recommendedName>
        <fullName evidence="1">Single-stranded DNA-binding protein</fullName>
        <shortName evidence="1">SSB</shortName>
    </recommendedName>
</protein>